<evidence type="ECO:0000250" key="1"/>
<evidence type="ECO:0000305" key="2"/>
<proteinExistence type="inferred from homology"/>
<dbReference type="EC" id="2.7.7.18"/>
<dbReference type="EMBL" id="AE014075">
    <property type="protein sequence ID" value="AAN79203.1"/>
    <property type="status" value="ALT_INIT"/>
    <property type="molecule type" value="Genomic_DNA"/>
</dbReference>
<dbReference type="RefSeq" id="WP_000838881.1">
    <property type="nucleotide sequence ID" value="NZ_CP051263.1"/>
</dbReference>
<dbReference type="SMR" id="Q8FJZ1"/>
<dbReference type="STRING" id="199310.c0730"/>
<dbReference type="KEGG" id="ecc:c0730"/>
<dbReference type="eggNOG" id="COG1057">
    <property type="taxonomic scope" value="Bacteria"/>
</dbReference>
<dbReference type="HOGENOM" id="CLU_069765_0_0_6"/>
<dbReference type="UniPathway" id="UPA00253">
    <property type="reaction ID" value="UER00332"/>
</dbReference>
<dbReference type="Proteomes" id="UP000001410">
    <property type="component" value="Chromosome"/>
</dbReference>
<dbReference type="GO" id="GO:0005524">
    <property type="term" value="F:ATP binding"/>
    <property type="evidence" value="ECO:0007669"/>
    <property type="project" value="UniProtKB-KW"/>
</dbReference>
<dbReference type="GO" id="GO:0004515">
    <property type="term" value="F:nicotinate-nucleotide adenylyltransferase activity"/>
    <property type="evidence" value="ECO:0007669"/>
    <property type="project" value="UniProtKB-UniRule"/>
</dbReference>
<dbReference type="GO" id="GO:0009435">
    <property type="term" value="P:NAD biosynthetic process"/>
    <property type="evidence" value="ECO:0007669"/>
    <property type="project" value="UniProtKB-UniRule"/>
</dbReference>
<dbReference type="CDD" id="cd02165">
    <property type="entry name" value="NMNAT"/>
    <property type="match status" value="1"/>
</dbReference>
<dbReference type="FunFam" id="3.40.50.620:FF:000039">
    <property type="entry name" value="Probable nicotinate-nucleotide adenylyltransferase"/>
    <property type="match status" value="1"/>
</dbReference>
<dbReference type="Gene3D" id="3.40.50.620">
    <property type="entry name" value="HUPs"/>
    <property type="match status" value="1"/>
</dbReference>
<dbReference type="HAMAP" id="MF_00244">
    <property type="entry name" value="NaMN_adenylyltr"/>
    <property type="match status" value="1"/>
</dbReference>
<dbReference type="InterPro" id="IPR004821">
    <property type="entry name" value="Cyt_trans-like"/>
</dbReference>
<dbReference type="InterPro" id="IPR005248">
    <property type="entry name" value="NadD/NMNAT"/>
</dbReference>
<dbReference type="InterPro" id="IPR014729">
    <property type="entry name" value="Rossmann-like_a/b/a_fold"/>
</dbReference>
<dbReference type="NCBIfam" id="TIGR00125">
    <property type="entry name" value="cyt_tran_rel"/>
    <property type="match status" value="1"/>
</dbReference>
<dbReference type="NCBIfam" id="TIGR00482">
    <property type="entry name" value="nicotinate (nicotinamide) nucleotide adenylyltransferase"/>
    <property type="match status" value="1"/>
</dbReference>
<dbReference type="NCBIfam" id="NF000839">
    <property type="entry name" value="PRK00071.1-1"/>
    <property type="match status" value="1"/>
</dbReference>
<dbReference type="NCBIfam" id="NF000840">
    <property type="entry name" value="PRK00071.1-3"/>
    <property type="match status" value="1"/>
</dbReference>
<dbReference type="PANTHER" id="PTHR39321">
    <property type="entry name" value="NICOTINATE-NUCLEOTIDE ADENYLYLTRANSFERASE-RELATED"/>
    <property type="match status" value="1"/>
</dbReference>
<dbReference type="PANTHER" id="PTHR39321:SF3">
    <property type="entry name" value="PHOSPHOPANTETHEINE ADENYLYLTRANSFERASE"/>
    <property type="match status" value="1"/>
</dbReference>
<dbReference type="Pfam" id="PF01467">
    <property type="entry name" value="CTP_transf_like"/>
    <property type="match status" value="1"/>
</dbReference>
<dbReference type="SUPFAM" id="SSF52374">
    <property type="entry name" value="Nucleotidylyl transferase"/>
    <property type="match status" value="1"/>
</dbReference>
<reference key="1">
    <citation type="journal article" date="2002" name="Proc. Natl. Acad. Sci. U.S.A.">
        <title>Extensive mosaic structure revealed by the complete genome sequence of uropathogenic Escherichia coli.</title>
        <authorList>
            <person name="Welch R.A."/>
            <person name="Burland V."/>
            <person name="Plunkett G. III"/>
            <person name="Redford P."/>
            <person name="Roesch P."/>
            <person name="Rasko D."/>
            <person name="Buckles E.L."/>
            <person name="Liou S.-R."/>
            <person name="Boutin A."/>
            <person name="Hackett J."/>
            <person name="Stroud D."/>
            <person name="Mayhew G.F."/>
            <person name="Rose D.J."/>
            <person name="Zhou S."/>
            <person name="Schwartz D.C."/>
            <person name="Perna N.T."/>
            <person name="Mobley H.L.T."/>
            <person name="Donnenberg M.S."/>
            <person name="Blattner F.R."/>
        </authorList>
    </citation>
    <scope>NUCLEOTIDE SEQUENCE [LARGE SCALE GENOMIC DNA]</scope>
    <source>
        <strain>CFT073 / ATCC 700928 / UPEC</strain>
    </source>
</reference>
<gene>
    <name type="primary">nadD</name>
    <name type="ordered locus">c0730</name>
</gene>
<sequence length="213" mass="24560">MKSLQALFGGTFDPVHYGHLKPVETLANLIGLTRVTIIPNNVPPHRPQPEANSMQRKHMLELAIADKPLFTLDERELKRNAPSYTAQTLKEWRQEQGPDVPLAFIIGQDSLLTFPTWYEYETILDNAHLIVCRRPGYPLEMAQPQYQQWLEDHLTHNPEDLHLQPAGKIYLAETPWFNISATIIRERLQNGESCEDLLPEPVLTYINQQGLYR</sequence>
<accession>Q8FJZ1</accession>
<keyword id="KW-0067">ATP-binding</keyword>
<keyword id="KW-0520">NAD</keyword>
<keyword id="KW-0547">Nucleotide-binding</keyword>
<keyword id="KW-0548">Nucleotidyltransferase</keyword>
<keyword id="KW-0662">Pyridine nucleotide biosynthesis</keyword>
<keyword id="KW-1185">Reference proteome</keyword>
<keyword id="KW-0808">Transferase</keyword>
<protein>
    <recommendedName>
        <fullName>Nicotinate-nucleotide adenylyltransferase</fullName>
        <ecNumber>2.7.7.18</ecNumber>
    </recommendedName>
    <alternativeName>
        <fullName>Deamido-NAD(+) diphosphorylase</fullName>
    </alternativeName>
    <alternativeName>
        <fullName>Deamido-NAD(+) pyrophosphorylase</fullName>
    </alternativeName>
    <alternativeName>
        <fullName>Nicotinate mononucleotide adenylyltransferase</fullName>
        <shortName>NaMN adenylyltransferase</shortName>
    </alternativeName>
</protein>
<organism>
    <name type="scientific">Escherichia coli O6:H1 (strain CFT073 / ATCC 700928 / UPEC)</name>
    <dbReference type="NCBI Taxonomy" id="199310"/>
    <lineage>
        <taxon>Bacteria</taxon>
        <taxon>Pseudomonadati</taxon>
        <taxon>Pseudomonadota</taxon>
        <taxon>Gammaproteobacteria</taxon>
        <taxon>Enterobacterales</taxon>
        <taxon>Enterobacteriaceae</taxon>
        <taxon>Escherichia</taxon>
    </lineage>
</organism>
<feature type="chain" id="PRO_0000181409" description="Nicotinate-nucleotide adenylyltransferase">
    <location>
        <begin position="1"/>
        <end position="213"/>
    </location>
</feature>
<name>NADD_ECOL6</name>
<comment type="function">
    <text evidence="1">Catalyzes the reversible adenylation of nicotinate mononucleotide (NaMN) to nicotinic acid adenine dinucleotide (NaAD).</text>
</comment>
<comment type="catalytic activity">
    <reaction>
        <text>nicotinate beta-D-ribonucleotide + ATP + H(+) = deamido-NAD(+) + diphosphate</text>
        <dbReference type="Rhea" id="RHEA:22860"/>
        <dbReference type="ChEBI" id="CHEBI:15378"/>
        <dbReference type="ChEBI" id="CHEBI:30616"/>
        <dbReference type="ChEBI" id="CHEBI:33019"/>
        <dbReference type="ChEBI" id="CHEBI:57502"/>
        <dbReference type="ChEBI" id="CHEBI:58437"/>
        <dbReference type="EC" id="2.7.7.18"/>
    </reaction>
</comment>
<comment type="pathway">
    <text>Cofactor biosynthesis; NAD(+) biosynthesis; deamido-NAD(+) from nicotinate D-ribonucleotide: step 1/1.</text>
</comment>
<comment type="similarity">
    <text evidence="2">Belongs to the NadD family.</text>
</comment>
<comment type="sequence caution" evidence="2">
    <conflict type="erroneous initiation">
        <sequence resource="EMBL-CDS" id="AAN79203"/>
    </conflict>
</comment>